<protein>
    <recommendedName>
        <fullName evidence="1">NADH-quinone oxidoreductase subunit B</fullName>
        <ecNumber evidence="1">7.1.1.-</ecNumber>
    </recommendedName>
    <alternativeName>
        <fullName evidence="1">NADH dehydrogenase I subunit B</fullName>
    </alternativeName>
    <alternativeName>
        <fullName evidence="1">NDH-1 subunit B</fullName>
    </alternativeName>
</protein>
<keyword id="KW-0004">4Fe-4S</keyword>
<keyword id="KW-1003">Cell membrane</keyword>
<keyword id="KW-0408">Iron</keyword>
<keyword id="KW-0411">Iron-sulfur</keyword>
<keyword id="KW-0472">Membrane</keyword>
<keyword id="KW-0479">Metal-binding</keyword>
<keyword id="KW-0520">NAD</keyword>
<keyword id="KW-0874">Quinone</keyword>
<keyword id="KW-1185">Reference proteome</keyword>
<keyword id="KW-1278">Translocase</keyword>
<keyword id="KW-0813">Transport</keyword>
<dbReference type="EC" id="7.1.1.-" evidence="1"/>
<dbReference type="EMBL" id="AP006618">
    <property type="protein sequence ID" value="BAD57513.1"/>
    <property type="molecule type" value="Genomic_DNA"/>
</dbReference>
<dbReference type="RefSeq" id="WP_011209198.1">
    <property type="nucleotide sequence ID" value="NC_006361.1"/>
</dbReference>
<dbReference type="SMR" id="Q5YWC8"/>
<dbReference type="STRING" id="247156.NFA_26660"/>
<dbReference type="GeneID" id="61133407"/>
<dbReference type="KEGG" id="nfa:NFA_26660"/>
<dbReference type="eggNOG" id="COG0377">
    <property type="taxonomic scope" value="Bacteria"/>
</dbReference>
<dbReference type="HOGENOM" id="CLU_055737_7_3_11"/>
<dbReference type="OrthoDB" id="9786737at2"/>
<dbReference type="Proteomes" id="UP000006820">
    <property type="component" value="Chromosome"/>
</dbReference>
<dbReference type="GO" id="GO:0005886">
    <property type="term" value="C:plasma membrane"/>
    <property type="evidence" value="ECO:0007669"/>
    <property type="project" value="UniProtKB-SubCell"/>
</dbReference>
<dbReference type="GO" id="GO:0045271">
    <property type="term" value="C:respiratory chain complex I"/>
    <property type="evidence" value="ECO:0007669"/>
    <property type="project" value="TreeGrafter"/>
</dbReference>
<dbReference type="GO" id="GO:0051539">
    <property type="term" value="F:4 iron, 4 sulfur cluster binding"/>
    <property type="evidence" value="ECO:0007669"/>
    <property type="project" value="UniProtKB-KW"/>
</dbReference>
<dbReference type="GO" id="GO:0005506">
    <property type="term" value="F:iron ion binding"/>
    <property type="evidence" value="ECO:0007669"/>
    <property type="project" value="UniProtKB-UniRule"/>
</dbReference>
<dbReference type="GO" id="GO:0008137">
    <property type="term" value="F:NADH dehydrogenase (ubiquinone) activity"/>
    <property type="evidence" value="ECO:0007669"/>
    <property type="project" value="InterPro"/>
</dbReference>
<dbReference type="GO" id="GO:0050136">
    <property type="term" value="F:NADH:ubiquinone reductase (non-electrogenic) activity"/>
    <property type="evidence" value="ECO:0007669"/>
    <property type="project" value="UniProtKB-UniRule"/>
</dbReference>
<dbReference type="GO" id="GO:0048038">
    <property type="term" value="F:quinone binding"/>
    <property type="evidence" value="ECO:0007669"/>
    <property type="project" value="UniProtKB-KW"/>
</dbReference>
<dbReference type="GO" id="GO:0009060">
    <property type="term" value="P:aerobic respiration"/>
    <property type="evidence" value="ECO:0007669"/>
    <property type="project" value="TreeGrafter"/>
</dbReference>
<dbReference type="GO" id="GO:0015990">
    <property type="term" value="P:electron transport coupled proton transport"/>
    <property type="evidence" value="ECO:0007669"/>
    <property type="project" value="TreeGrafter"/>
</dbReference>
<dbReference type="FunFam" id="3.40.50.12280:FF:000004">
    <property type="entry name" value="NADH-quinone oxidoreductase subunit B"/>
    <property type="match status" value="1"/>
</dbReference>
<dbReference type="Gene3D" id="3.40.50.12280">
    <property type="match status" value="1"/>
</dbReference>
<dbReference type="HAMAP" id="MF_01356">
    <property type="entry name" value="NDH1_NuoB"/>
    <property type="match status" value="1"/>
</dbReference>
<dbReference type="InterPro" id="IPR006137">
    <property type="entry name" value="NADH_UbQ_OxRdtase-like_20kDa"/>
</dbReference>
<dbReference type="InterPro" id="IPR006138">
    <property type="entry name" value="NADH_UQ_OxRdtase_20Kd_su"/>
</dbReference>
<dbReference type="NCBIfam" id="TIGR01957">
    <property type="entry name" value="nuoB_fam"/>
    <property type="match status" value="1"/>
</dbReference>
<dbReference type="NCBIfam" id="NF005012">
    <property type="entry name" value="PRK06411.1"/>
    <property type="match status" value="1"/>
</dbReference>
<dbReference type="PANTHER" id="PTHR11995">
    <property type="entry name" value="NADH DEHYDROGENASE"/>
    <property type="match status" value="1"/>
</dbReference>
<dbReference type="PANTHER" id="PTHR11995:SF14">
    <property type="entry name" value="NADH DEHYDROGENASE [UBIQUINONE] IRON-SULFUR PROTEIN 7, MITOCHONDRIAL"/>
    <property type="match status" value="1"/>
</dbReference>
<dbReference type="Pfam" id="PF01058">
    <property type="entry name" value="Oxidored_q6"/>
    <property type="match status" value="1"/>
</dbReference>
<dbReference type="SUPFAM" id="SSF56770">
    <property type="entry name" value="HydA/Nqo6-like"/>
    <property type="match status" value="1"/>
</dbReference>
<dbReference type="PROSITE" id="PS01150">
    <property type="entry name" value="COMPLEX1_20K"/>
    <property type="match status" value="1"/>
</dbReference>
<sequence length="184" mass="19892">MGLEEKLPSGFLLSTVESFAGYLRKGSVWPATFGLACCAIEMMATGAGRFDIARFGMEAFRASPRQADLMIVAGRVSQKMAPVLRQVYDQMAEPKWVLAMGVCASSGGMFNNYAVVQGVDHVVPVDIYLPGCPPRPEMLLNAILALHDKIQHTPLGVNRQEAVRAAEQAALAATPTIRMEGLLR</sequence>
<comment type="function">
    <text evidence="1">NDH-1 shuttles electrons from NADH, via FMN and iron-sulfur (Fe-S) centers, to quinones in the respiratory chain. The immediate electron acceptor for the enzyme in this species is believed to be a menaquinone. Couples the redox reaction to proton translocation (for every two electrons transferred, four hydrogen ions are translocated across the cytoplasmic membrane), and thus conserves the redox energy in a proton gradient.</text>
</comment>
<comment type="catalytic activity">
    <reaction evidence="1">
        <text>a quinone + NADH + 5 H(+)(in) = a quinol + NAD(+) + 4 H(+)(out)</text>
        <dbReference type="Rhea" id="RHEA:57888"/>
        <dbReference type="ChEBI" id="CHEBI:15378"/>
        <dbReference type="ChEBI" id="CHEBI:24646"/>
        <dbReference type="ChEBI" id="CHEBI:57540"/>
        <dbReference type="ChEBI" id="CHEBI:57945"/>
        <dbReference type="ChEBI" id="CHEBI:132124"/>
    </reaction>
</comment>
<comment type="cofactor">
    <cofactor evidence="1">
        <name>[4Fe-4S] cluster</name>
        <dbReference type="ChEBI" id="CHEBI:49883"/>
    </cofactor>
    <text evidence="1">Binds 1 [4Fe-4S] cluster.</text>
</comment>
<comment type="subunit">
    <text evidence="1">NDH-1 is composed of 14 different subunits. Subunits NuoB, C, D, E, F, and G constitute the peripheral sector of the complex.</text>
</comment>
<comment type="subcellular location">
    <subcellularLocation>
        <location evidence="1">Cell membrane</location>
        <topology evidence="1">Peripheral membrane protein</topology>
        <orientation evidence="1">Cytoplasmic side</orientation>
    </subcellularLocation>
</comment>
<comment type="similarity">
    <text evidence="1">Belongs to the complex I 20 kDa subunit family.</text>
</comment>
<name>NUOB_NOCFA</name>
<reference key="1">
    <citation type="journal article" date="2004" name="Proc. Natl. Acad. Sci. U.S.A.">
        <title>The complete genomic sequence of Nocardia farcinica IFM 10152.</title>
        <authorList>
            <person name="Ishikawa J."/>
            <person name="Yamashita A."/>
            <person name="Mikami Y."/>
            <person name="Hoshino Y."/>
            <person name="Kurita H."/>
            <person name="Hotta K."/>
            <person name="Shiba T."/>
            <person name="Hattori M."/>
        </authorList>
    </citation>
    <scope>NUCLEOTIDE SEQUENCE [LARGE SCALE GENOMIC DNA]</scope>
    <source>
        <strain>IFM 10152</strain>
    </source>
</reference>
<feature type="chain" id="PRO_0000376293" description="NADH-quinone oxidoreductase subunit B">
    <location>
        <begin position="1"/>
        <end position="184"/>
    </location>
</feature>
<feature type="binding site" evidence="1">
    <location>
        <position position="37"/>
    </location>
    <ligand>
        <name>[4Fe-4S] cluster</name>
        <dbReference type="ChEBI" id="CHEBI:49883"/>
    </ligand>
</feature>
<feature type="binding site" evidence="1">
    <location>
        <position position="38"/>
    </location>
    <ligand>
        <name>[4Fe-4S] cluster</name>
        <dbReference type="ChEBI" id="CHEBI:49883"/>
    </ligand>
</feature>
<feature type="binding site" evidence="1">
    <location>
        <position position="103"/>
    </location>
    <ligand>
        <name>[4Fe-4S] cluster</name>
        <dbReference type="ChEBI" id="CHEBI:49883"/>
    </ligand>
</feature>
<feature type="binding site" evidence="1">
    <location>
        <position position="132"/>
    </location>
    <ligand>
        <name>[4Fe-4S] cluster</name>
        <dbReference type="ChEBI" id="CHEBI:49883"/>
    </ligand>
</feature>
<organism>
    <name type="scientific">Nocardia farcinica (strain IFM 10152)</name>
    <dbReference type="NCBI Taxonomy" id="247156"/>
    <lineage>
        <taxon>Bacteria</taxon>
        <taxon>Bacillati</taxon>
        <taxon>Actinomycetota</taxon>
        <taxon>Actinomycetes</taxon>
        <taxon>Mycobacteriales</taxon>
        <taxon>Nocardiaceae</taxon>
        <taxon>Nocardia</taxon>
    </lineage>
</organism>
<evidence type="ECO:0000255" key="1">
    <source>
        <dbReference type="HAMAP-Rule" id="MF_01356"/>
    </source>
</evidence>
<gene>
    <name evidence="1" type="primary">nuoB</name>
    <name type="ordered locus">NFA_26660</name>
</gene>
<accession>Q5YWC8</accession>
<proteinExistence type="inferred from homology"/>